<dbReference type="EMBL" id="CP000023">
    <property type="protein sequence ID" value="AAV60190.1"/>
    <property type="molecule type" value="Genomic_DNA"/>
</dbReference>
<dbReference type="RefSeq" id="WP_011225594.1">
    <property type="nucleotide sequence ID" value="NC_006448.1"/>
</dbReference>
<dbReference type="SMR" id="Q5M5J5"/>
<dbReference type="STRING" id="264199.stu0480"/>
<dbReference type="GeneID" id="66898390"/>
<dbReference type="KEGG" id="stl:stu0480"/>
<dbReference type="eggNOG" id="COG0711">
    <property type="taxonomic scope" value="Bacteria"/>
</dbReference>
<dbReference type="HOGENOM" id="CLU_079215_4_2_9"/>
<dbReference type="Proteomes" id="UP000001170">
    <property type="component" value="Chromosome"/>
</dbReference>
<dbReference type="GO" id="GO:0005886">
    <property type="term" value="C:plasma membrane"/>
    <property type="evidence" value="ECO:0007669"/>
    <property type="project" value="UniProtKB-SubCell"/>
</dbReference>
<dbReference type="GO" id="GO:0045259">
    <property type="term" value="C:proton-transporting ATP synthase complex"/>
    <property type="evidence" value="ECO:0007669"/>
    <property type="project" value="UniProtKB-KW"/>
</dbReference>
<dbReference type="GO" id="GO:0046933">
    <property type="term" value="F:proton-transporting ATP synthase activity, rotational mechanism"/>
    <property type="evidence" value="ECO:0007669"/>
    <property type="project" value="UniProtKB-UniRule"/>
</dbReference>
<dbReference type="GO" id="GO:0046961">
    <property type="term" value="F:proton-transporting ATPase activity, rotational mechanism"/>
    <property type="evidence" value="ECO:0007669"/>
    <property type="project" value="TreeGrafter"/>
</dbReference>
<dbReference type="CDD" id="cd06503">
    <property type="entry name" value="ATP-synt_Fo_b"/>
    <property type="match status" value="1"/>
</dbReference>
<dbReference type="Gene3D" id="6.10.250.1580">
    <property type="match status" value="1"/>
</dbReference>
<dbReference type="HAMAP" id="MF_01398">
    <property type="entry name" value="ATP_synth_b_bprime"/>
    <property type="match status" value="1"/>
</dbReference>
<dbReference type="InterPro" id="IPR028987">
    <property type="entry name" value="ATP_synth_B-like_membr_sf"/>
</dbReference>
<dbReference type="InterPro" id="IPR002146">
    <property type="entry name" value="ATP_synth_b/b'su_bac/chlpt"/>
</dbReference>
<dbReference type="InterPro" id="IPR005864">
    <property type="entry name" value="ATP_synth_F0_bsu_bac"/>
</dbReference>
<dbReference type="InterPro" id="IPR050059">
    <property type="entry name" value="ATP_synthase_B_chain"/>
</dbReference>
<dbReference type="NCBIfam" id="TIGR01144">
    <property type="entry name" value="ATP_synt_b"/>
    <property type="match status" value="1"/>
</dbReference>
<dbReference type="PANTHER" id="PTHR33445:SF1">
    <property type="entry name" value="ATP SYNTHASE SUBUNIT B"/>
    <property type="match status" value="1"/>
</dbReference>
<dbReference type="PANTHER" id="PTHR33445">
    <property type="entry name" value="ATP SYNTHASE SUBUNIT B', CHLOROPLASTIC"/>
    <property type="match status" value="1"/>
</dbReference>
<dbReference type="Pfam" id="PF00430">
    <property type="entry name" value="ATP-synt_B"/>
    <property type="match status" value="1"/>
</dbReference>
<dbReference type="SUPFAM" id="SSF81573">
    <property type="entry name" value="F1F0 ATP synthase subunit B, membrane domain"/>
    <property type="match status" value="1"/>
</dbReference>
<comment type="function">
    <text evidence="1">F(1)F(0) ATP synthase produces ATP from ADP in the presence of a proton or sodium gradient. F-type ATPases consist of two structural domains, F(1) containing the extramembraneous catalytic core and F(0) containing the membrane proton channel, linked together by a central stalk and a peripheral stalk. During catalysis, ATP synthesis in the catalytic domain of F(1) is coupled via a rotary mechanism of the central stalk subunits to proton translocation.</text>
</comment>
<comment type="function">
    <text evidence="1">Component of the F(0) channel, it forms part of the peripheral stalk, linking F(1) to F(0).</text>
</comment>
<comment type="subunit">
    <text evidence="1">F-type ATPases have 2 components, F(1) - the catalytic core - and F(0) - the membrane proton channel. F(1) has five subunits: alpha(3), beta(3), gamma(1), delta(1), epsilon(1). F(0) has three main subunits: a(1), b(2) and c(10-14). The alpha and beta chains form an alternating ring which encloses part of the gamma chain. F(1) is attached to F(0) by a central stalk formed by the gamma and epsilon chains, while a peripheral stalk is formed by the delta and b chains.</text>
</comment>
<comment type="subcellular location">
    <subcellularLocation>
        <location evidence="1">Cell membrane</location>
        <topology evidence="1">Single-pass membrane protein</topology>
    </subcellularLocation>
</comment>
<comment type="similarity">
    <text evidence="1">Belongs to the ATPase B chain family.</text>
</comment>
<name>ATPF_STRT2</name>
<evidence type="ECO:0000255" key="1">
    <source>
        <dbReference type="HAMAP-Rule" id="MF_01398"/>
    </source>
</evidence>
<accession>Q5M5J5</accession>
<feature type="chain" id="PRO_0000368814" description="ATP synthase subunit b">
    <location>
        <begin position="1"/>
        <end position="165"/>
    </location>
</feature>
<feature type="transmembrane region" description="Helical" evidence="1">
    <location>
        <begin position="5"/>
        <end position="27"/>
    </location>
</feature>
<sequence>MSLLINSTTLGNIIITLGSVFLLYYLIRKFAWDQITGIFVAREKKIATDIDSAENARQEAEILVQKRQEELAAARTEATQIIDEAKKTGKTKESKIIAEAYDEAKRLKEKANQDIAQSWVEALAGVKGEVADLTVLLAEKVMKQNLDAKAQSDLIDSYLDQLGDA</sequence>
<protein>
    <recommendedName>
        <fullName evidence="1">ATP synthase subunit b</fullName>
    </recommendedName>
    <alternativeName>
        <fullName evidence="1">ATP synthase F(0) sector subunit b</fullName>
    </alternativeName>
    <alternativeName>
        <fullName evidence="1">ATPase subunit I</fullName>
    </alternativeName>
    <alternativeName>
        <fullName evidence="1">F-type ATPase subunit b</fullName>
        <shortName evidence="1">F-ATPase subunit b</shortName>
    </alternativeName>
</protein>
<keyword id="KW-0066">ATP synthesis</keyword>
<keyword id="KW-1003">Cell membrane</keyword>
<keyword id="KW-0138">CF(0)</keyword>
<keyword id="KW-0375">Hydrogen ion transport</keyword>
<keyword id="KW-0406">Ion transport</keyword>
<keyword id="KW-0472">Membrane</keyword>
<keyword id="KW-1185">Reference proteome</keyword>
<keyword id="KW-0812">Transmembrane</keyword>
<keyword id="KW-1133">Transmembrane helix</keyword>
<keyword id="KW-0813">Transport</keyword>
<reference key="1">
    <citation type="journal article" date="2004" name="Nat. Biotechnol.">
        <title>Complete sequence and comparative genome analysis of the dairy bacterium Streptococcus thermophilus.</title>
        <authorList>
            <person name="Bolotin A."/>
            <person name="Quinquis B."/>
            <person name="Renault P."/>
            <person name="Sorokin A."/>
            <person name="Ehrlich S.D."/>
            <person name="Kulakauskas S."/>
            <person name="Lapidus A."/>
            <person name="Goltsman E."/>
            <person name="Mazur M."/>
            <person name="Pusch G.D."/>
            <person name="Fonstein M."/>
            <person name="Overbeek R."/>
            <person name="Kyprides N."/>
            <person name="Purnelle B."/>
            <person name="Prozzi D."/>
            <person name="Ngui K."/>
            <person name="Masuy D."/>
            <person name="Hancy F."/>
            <person name="Burteau S."/>
            <person name="Boutry M."/>
            <person name="Delcour J."/>
            <person name="Goffeau A."/>
            <person name="Hols P."/>
        </authorList>
    </citation>
    <scope>NUCLEOTIDE SEQUENCE [LARGE SCALE GENOMIC DNA]</scope>
    <source>
        <strain>ATCC BAA-250 / LMG 18311</strain>
    </source>
</reference>
<organism>
    <name type="scientific">Streptococcus thermophilus (strain ATCC BAA-250 / LMG 18311)</name>
    <dbReference type="NCBI Taxonomy" id="264199"/>
    <lineage>
        <taxon>Bacteria</taxon>
        <taxon>Bacillati</taxon>
        <taxon>Bacillota</taxon>
        <taxon>Bacilli</taxon>
        <taxon>Lactobacillales</taxon>
        <taxon>Streptococcaceae</taxon>
        <taxon>Streptococcus</taxon>
    </lineage>
</organism>
<gene>
    <name evidence="1" type="primary">atpF</name>
    <name type="ordered locus">stu0480</name>
</gene>
<proteinExistence type="inferred from homology"/>